<protein>
    <recommendedName>
        <fullName evidence="1">Acetyl-coenzyme A carboxylase carboxyl transferase subunit beta 1</fullName>
        <shortName evidence="1">ACCase subunit beta 1</shortName>
        <shortName evidence="1">Acetyl-CoA carboxylase carboxyltransferase subunit beta 1</shortName>
        <ecNumber evidence="1">2.1.3.15</ecNumber>
    </recommendedName>
</protein>
<gene>
    <name evidence="1" type="primary">accD1</name>
    <name type="ordered locus">VIBHAR_03100</name>
</gene>
<keyword id="KW-0067">ATP-binding</keyword>
<keyword id="KW-0963">Cytoplasm</keyword>
<keyword id="KW-0275">Fatty acid biosynthesis</keyword>
<keyword id="KW-0276">Fatty acid metabolism</keyword>
<keyword id="KW-0444">Lipid biosynthesis</keyword>
<keyword id="KW-0443">Lipid metabolism</keyword>
<keyword id="KW-0479">Metal-binding</keyword>
<keyword id="KW-0547">Nucleotide-binding</keyword>
<keyword id="KW-0808">Transferase</keyword>
<keyword id="KW-0862">Zinc</keyword>
<keyword id="KW-0863">Zinc-finger</keyword>
<name>ACCD1_VIBC1</name>
<proteinExistence type="inferred from homology"/>
<evidence type="ECO:0000255" key="1">
    <source>
        <dbReference type="HAMAP-Rule" id="MF_01395"/>
    </source>
</evidence>
<evidence type="ECO:0000255" key="2">
    <source>
        <dbReference type="PROSITE-ProRule" id="PRU01136"/>
    </source>
</evidence>
<evidence type="ECO:0000256" key="3">
    <source>
        <dbReference type="SAM" id="MobiDB-lite"/>
    </source>
</evidence>
<dbReference type="EC" id="2.1.3.15" evidence="1"/>
<dbReference type="EMBL" id="CP000789">
    <property type="protein sequence ID" value="ABU72049.1"/>
    <property type="molecule type" value="Genomic_DNA"/>
</dbReference>
<dbReference type="SMR" id="A7MS74"/>
<dbReference type="KEGG" id="vha:VIBHAR_03100"/>
<dbReference type="PATRIC" id="fig|338187.25.peg.3089"/>
<dbReference type="UniPathway" id="UPA00655">
    <property type="reaction ID" value="UER00711"/>
</dbReference>
<dbReference type="Proteomes" id="UP000008152">
    <property type="component" value="Chromosome I"/>
</dbReference>
<dbReference type="GO" id="GO:0009329">
    <property type="term" value="C:acetate CoA-transferase complex"/>
    <property type="evidence" value="ECO:0007669"/>
    <property type="project" value="TreeGrafter"/>
</dbReference>
<dbReference type="GO" id="GO:0003989">
    <property type="term" value="F:acetyl-CoA carboxylase activity"/>
    <property type="evidence" value="ECO:0007669"/>
    <property type="project" value="InterPro"/>
</dbReference>
<dbReference type="GO" id="GO:0005524">
    <property type="term" value="F:ATP binding"/>
    <property type="evidence" value="ECO:0007669"/>
    <property type="project" value="UniProtKB-KW"/>
</dbReference>
<dbReference type="GO" id="GO:0016743">
    <property type="term" value="F:carboxyl- or carbamoyltransferase activity"/>
    <property type="evidence" value="ECO:0007669"/>
    <property type="project" value="UniProtKB-UniRule"/>
</dbReference>
<dbReference type="GO" id="GO:0008270">
    <property type="term" value="F:zinc ion binding"/>
    <property type="evidence" value="ECO:0007669"/>
    <property type="project" value="UniProtKB-UniRule"/>
</dbReference>
<dbReference type="GO" id="GO:0006633">
    <property type="term" value="P:fatty acid biosynthetic process"/>
    <property type="evidence" value="ECO:0007669"/>
    <property type="project" value="UniProtKB-KW"/>
</dbReference>
<dbReference type="GO" id="GO:2001295">
    <property type="term" value="P:malonyl-CoA biosynthetic process"/>
    <property type="evidence" value="ECO:0007669"/>
    <property type="project" value="UniProtKB-UniRule"/>
</dbReference>
<dbReference type="FunFam" id="3.90.226.10:FF:000013">
    <property type="entry name" value="Acetyl-coenzyme A carboxylase carboxyl transferase subunit beta"/>
    <property type="match status" value="1"/>
</dbReference>
<dbReference type="Gene3D" id="3.90.226.10">
    <property type="entry name" value="2-enoyl-CoA Hydratase, Chain A, domain 1"/>
    <property type="match status" value="1"/>
</dbReference>
<dbReference type="HAMAP" id="MF_01395">
    <property type="entry name" value="AcetylCoA_CT_beta"/>
    <property type="match status" value="1"/>
</dbReference>
<dbReference type="InterPro" id="IPR034733">
    <property type="entry name" value="AcCoA_carboxyl_beta"/>
</dbReference>
<dbReference type="InterPro" id="IPR000438">
    <property type="entry name" value="Acetyl_CoA_COase_Trfase_b_su"/>
</dbReference>
<dbReference type="InterPro" id="IPR029045">
    <property type="entry name" value="ClpP/crotonase-like_dom_sf"/>
</dbReference>
<dbReference type="InterPro" id="IPR011762">
    <property type="entry name" value="COA_CT_N"/>
</dbReference>
<dbReference type="InterPro" id="IPR041010">
    <property type="entry name" value="Znf-ACC"/>
</dbReference>
<dbReference type="NCBIfam" id="TIGR00515">
    <property type="entry name" value="accD"/>
    <property type="match status" value="1"/>
</dbReference>
<dbReference type="PANTHER" id="PTHR42995">
    <property type="entry name" value="ACETYL-COENZYME A CARBOXYLASE CARBOXYL TRANSFERASE SUBUNIT BETA, CHLOROPLASTIC"/>
    <property type="match status" value="1"/>
</dbReference>
<dbReference type="PANTHER" id="PTHR42995:SF5">
    <property type="entry name" value="ACETYL-COENZYME A CARBOXYLASE CARBOXYL TRANSFERASE SUBUNIT BETA, CHLOROPLASTIC"/>
    <property type="match status" value="1"/>
</dbReference>
<dbReference type="Pfam" id="PF01039">
    <property type="entry name" value="Carboxyl_trans"/>
    <property type="match status" value="1"/>
</dbReference>
<dbReference type="Pfam" id="PF17848">
    <property type="entry name" value="Zn_ribbon_ACC"/>
    <property type="match status" value="1"/>
</dbReference>
<dbReference type="PRINTS" id="PR01070">
    <property type="entry name" value="ACCCTRFRASEB"/>
</dbReference>
<dbReference type="SUPFAM" id="SSF52096">
    <property type="entry name" value="ClpP/crotonase"/>
    <property type="match status" value="1"/>
</dbReference>
<dbReference type="PROSITE" id="PS50980">
    <property type="entry name" value="COA_CT_NTER"/>
    <property type="match status" value="1"/>
</dbReference>
<reference key="1">
    <citation type="submission" date="2007-08" db="EMBL/GenBank/DDBJ databases">
        <authorList>
            <consortium name="The Vibrio harveyi Genome Sequencing Project"/>
            <person name="Bassler B."/>
            <person name="Clifton S.W."/>
            <person name="Fulton L."/>
            <person name="Delehaunty K."/>
            <person name="Fronick C."/>
            <person name="Harrison M."/>
            <person name="Markivic C."/>
            <person name="Fulton R."/>
            <person name="Tin-Wollam A.-M."/>
            <person name="Shah N."/>
            <person name="Pepin K."/>
            <person name="Nash W."/>
            <person name="Thiruvilangam P."/>
            <person name="Bhonagiri V."/>
            <person name="Waters C."/>
            <person name="Tu K.C."/>
            <person name="Irgon J."/>
            <person name="Wilson R.K."/>
        </authorList>
    </citation>
    <scope>NUCLEOTIDE SEQUENCE [LARGE SCALE GENOMIC DNA]</scope>
    <source>
        <strain>ATCC BAA-1116 / BB120</strain>
    </source>
</reference>
<sequence length="308" mass="33989">MSWLEKILEKSNLVSSRKASIPEGVWTKCTSCEQVLYHAELERNLEVCPKCNHHMRMKARRRLETFLDEGERVELGTELEPQDKLKFKDSKRYKERISAAQKSSGEKDALIVMQGELLGMPLVACAFEFSFMGGSMGSVVGARFVKAVEAAIENNCALVCFSASGGARMQEALMSLMQMAKTSAALERLSDKGLPFISVLTDPTMGGVSASLAMLGDINIGEPKALIGFAGRRVIEQTVREDLPEGFQRSEFLLEHGAIDMIVDRREMRQRVGGLVAKLTNHKSPMVVSVNESPNEEPYSVPEADEKG</sequence>
<comment type="function">
    <text evidence="1">Component of the acetyl coenzyme A carboxylase (ACC) complex. Biotin carboxylase (BC) catalyzes the carboxylation of biotin on its carrier protein (BCCP) and then the CO(2) group is transferred by the transcarboxylase to acetyl-CoA to form malonyl-CoA.</text>
</comment>
<comment type="catalytic activity">
    <reaction evidence="1">
        <text>N(6)-carboxybiotinyl-L-lysyl-[protein] + acetyl-CoA = N(6)-biotinyl-L-lysyl-[protein] + malonyl-CoA</text>
        <dbReference type="Rhea" id="RHEA:54728"/>
        <dbReference type="Rhea" id="RHEA-COMP:10505"/>
        <dbReference type="Rhea" id="RHEA-COMP:10506"/>
        <dbReference type="ChEBI" id="CHEBI:57288"/>
        <dbReference type="ChEBI" id="CHEBI:57384"/>
        <dbReference type="ChEBI" id="CHEBI:83144"/>
        <dbReference type="ChEBI" id="CHEBI:83145"/>
        <dbReference type="EC" id="2.1.3.15"/>
    </reaction>
</comment>
<comment type="cofactor">
    <cofactor evidence="1">
        <name>Zn(2+)</name>
        <dbReference type="ChEBI" id="CHEBI:29105"/>
    </cofactor>
    <text evidence="1">Binds 1 zinc ion per subunit.</text>
</comment>
<comment type="pathway">
    <text evidence="1">Lipid metabolism; malonyl-CoA biosynthesis; malonyl-CoA from acetyl-CoA: step 1/1.</text>
</comment>
<comment type="subunit">
    <text evidence="1">Acetyl-CoA carboxylase is a heterohexamer composed of biotin carboxyl carrier protein (AccB), biotin carboxylase (AccC) and two subunits each of ACCase subunit alpha (AccA) and ACCase subunit beta (AccD).</text>
</comment>
<comment type="subcellular location">
    <subcellularLocation>
        <location evidence="1">Cytoplasm</location>
    </subcellularLocation>
</comment>
<comment type="similarity">
    <text evidence="1">Belongs to the AccD/PCCB family.</text>
</comment>
<feature type="chain" id="PRO_0000359088" description="Acetyl-coenzyme A carboxylase carboxyl transferase subunit beta 1">
    <location>
        <begin position="1"/>
        <end position="308"/>
    </location>
</feature>
<feature type="domain" description="CoA carboxyltransferase N-terminal" evidence="2">
    <location>
        <begin position="25"/>
        <end position="294"/>
    </location>
</feature>
<feature type="zinc finger region" description="C4-type" evidence="1">
    <location>
        <begin position="29"/>
        <end position="51"/>
    </location>
</feature>
<feature type="region of interest" description="Disordered" evidence="3">
    <location>
        <begin position="289"/>
        <end position="308"/>
    </location>
</feature>
<feature type="binding site" evidence="1">
    <location>
        <position position="29"/>
    </location>
    <ligand>
        <name>Zn(2+)</name>
        <dbReference type="ChEBI" id="CHEBI:29105"/>
    </ligand>
</feature>
<feature type="binding site" evidence="1">
    <location>
        <position position="32"/>
    </location>
    <ligand>
        <name>Zn(2+)</name>
        <dbReference type="ChEBI" id="CHEBI:29105"/>
    </ligand>
</feature>
<feature type="binding site" evidence="1">
    <location>
        <position position="48"/>
    </location>
    <ligand>
        <name>Zn(2+)</name>
        <dbReference type="ChEBI" id="CHEBI:29105"/>
    </ligand>
</feature>
<feature type="binding site" evidence="1">
    <location>
        <position position="51"/>
    </location>
    <ligand>
        <name>Zn(2+)</name>
        <dbReference type="ChEBI" id="CHEBI:29105"/>
    </ligand>
</feature>
<accession>A7MS74</accession>
<organism>
    <name type="scientific">Vibrio campbellii (strain ATCC BAA-1116)</name>
    <dbReference type="NCBI Taxonomy" id="2902295"/>
    <lineage>
        <taxon>Bacteria</taxon>
        <taxon>Pseudomonadati</taxon>
        <taxon>Pseudomonadota</taxon>
        <taxon>Gammaproteobacteria</taxon>
        <taxon>Vibrionales</taxon>
        <taxon>Vibrionaceae</taxon>
        <taxon>Vibrio</taxon>
    </lineage>
</organism>